<accession>C6DC49</accession>
<sequence>MIRTMLQGKLHRVKVTQADLHYEGSCAIDQDFMDAAGILEYEAIDIYNVDNGQRFSTYAIAGERGSRIISVNGAAARLACVGDKLIICSYVQMSDEQARSHNPKVAYFSGDNELQRQAKAIPVQVA</sequence>
<evidence type="ECO:0000255" key="1">
    <source>
        <dbReference type="HAMAP-Rule" id="MF_00446"/>
    </source>
</evidence>
<protein>
    <recommendedName>
        <fullName evidence="1">Aspartate 1-decarboxylase</fullName>
        <ecNumber evidence="1">4.1.1.11</ecNumber>
    </recommendedName>
    <alternativeName>
        <fullName evidence="1">Aspartate alpha-decarboxylase</fullName>
    </alternativeName>
    <component>
        <recommendedName>
            <fullName evidence="1">Aspartate 1-decarboxylase beta chain</fullName>
        </recommendedName>
    </component>
    <component>
        <recommendedName>
            <fullName evidence="1">Aspartate 1-decarboxylase alpha chain</fullName>
        </recommendedName>
    </component>
</protein>
<reference key="1">
    <citation type="submission" date="2009-07" db="EMBL/GenBank/DDBJ databases">
        <title>Complete sequence of Pectobacterium carotovorum subsp. carotovorum PC1.</title>
        <authorList>
            <consortium name="US DOE Joint Genome Institute"/>
            <person name="Lucas S."/>
            <person name="Copeland A."/>
            <person name="Lapidus A."/>
            <person name="Glavina del Rio T."/>
            <person name="Tice H."/>
            <person name="Bruce D."/>
            <person name="Goodwin L."/>
            <person name="Pitluck S."/>
            <person name="Munk A.C."/>
            <person name="Brettin T."/>
            <person name="Detter J.C."/>
            <person name="Han C."/>
            <person name="Tapia R."/>
            <person name="Larimer F."/>
            <person name="Land M."/>
            <person name="Hauser L."/>
            <person name="Kyrpides N."/>
            <person name="Mikhailova N."/>
            <person name="Balakrishnan V."/>
            <person name="Glasner J."/>
            <person name="Perna N.T."/>
        </authorList>
    </citation>
    <scope>NUCLEOTIDE SEQUENCE [LARGE SCALE GENOMIC DNA]</scope>
    <source>
        <strain>PC1</strain>
    </source>
</reference>
<gene>
    <name evidence="1" type="primary">panD</name>
    <name type="ordered locus">PC1_3120</name>
</gene>
<name>PAND_PECCP</name>
<comment type="function">
    <text evidence="1">Catalyzes the pyruvoyl-dependent decarboxylation of aspartate to produce beta-alanine.</text>
</comment>
<comment type="catalytic activity">
    <reaction evidence="1">
        <text>L-aspartate + H(+) = beta-alanine + CO2</text>
        <dbReference type="Rhea" id="RHEA:19497"/>
        <dbReference type="ChEBI" id="CHEBI:15378"/>
        <dbReference type="ChEBI" id="CHEBI:16526"/>
        <dbReference type="ChEBI" id="CHEBI:29991"/>
        <dbReference type="ChEBI" id="CHEBI:57966"/>
        <dbReference type="EC" id="4.1.1.11"/>
    </reaction>
</comment>
<comment type="cofactor">
    <cofactor evidence="1">
        <name>pyruvate</name>
        <dbReference type="ChEBI" id="CHEBI:15361"/>
    </cofactor>
    <text evidence="1">Binds 1 pyruvoyl group covalently per subunit.</text>
</comment>
<comment type="pathway">
    <text evidence="1">Cofactor biosynthesis; (R)-pantothenate biosynthesis; beta-alanine from L-aspartate: step 1/1.</text>
</comment>
<comment type="subunit">
    <text evidence="1">Heterooctamer of four alpha and four beta subunits.</text>
</comment>
<comment type="subcellular location">
    <subcellularLocation>
        <location evidence="1">Cytoplasm</location>
    </subcellularLocation>
</comment>
<comment type="PTM">
    <text evidence="1">Is synthesized initially as an inactive proenzyme, which is activated by self-cleavage at a specific serine bond to produce a beta-subunit with a hydroxyl group at its C-terminus and an alpha-subunit with a pyruvoyl group at its N-terminus.</text>
</comment>
<comment type="similarity">
    <text evidence="1">Belongs to the PanD family.</text>
</comment>
<feature type="chain" id="PRO_1000206190" description="Aspartate 1-decarboxylase beta chain" evidence="1">
    <location>
        <begin position="1"/>
        <end position="24"/>
    </location>
</feature>
<feature type="chain" id="PRO_1000206191" description="Aspartate 1-decarboxylase alpha chain" evidence="1">
    <location>
        <begin position="25"/>
        <end position="126"/>
    </location>
</feature>
<feature type="active site" description="Schiff-base intermediate with substrate; via pyruvic acid" evidence="1">
    <location>
        <position position="25"/>
    </location>
</feature>
<feature type="active site" description="Proton donor" evidence="1">
    <location>
        <position position="58"/>
    </location>
</feature>
<feature type="binding site" evidence="1">
    <location>
        <position position="57"/>
    </location>
    <ligand>
        <name>substrate</name>
    </ligand>
</feature>
<feature type="binding site" evidence="1">
    <location>
        <begin position="73"/>
        <end position="75"/>
    </location>
    <ligand>
        <name>substrate</name>
    </ligand>
</feature>
<feature type="modified residue" description="Pyruvic acid (Ser)" evidence="1">
    <location>
        <position position="25"/>
    </location>
</feature>
<organism>
    <name type="scientific">Pectobacterium carotovorum subsp. carotovorum (strain PC1)</name>
    <dbReference type="NCBI Taxonomy" id="561230"/>
    <lineage>
        <taxon>Bacteria</taxon>
        <taxon>Pseudomonadati</taxon>
        <taxon>Pseudomonadota</taxon>
        <taxon>Gammaproteobacteria</taxon>
        <taxon>Enterobacterales</taxon>
        <taxon>Pectobacteriaceae</taxon>
        <taxon>Pectobacterium</taxon>
    </lineage>
</organism>
<dbReference type="EC" id="4.1.1.11" evidence="1"/>
<dbReference type="EMBL" id="CP001657">
    <property type="protein sequence ID" value="ACT14143.1"/>
    <property type="molecule type" value="Genomic_DNA"/>
</dbReference>
<dbReference type="RefSeq" id="WP_015841288.1">
    <property type="nucleotide sequence ID" value="NC_012917.1"/>
</dbReference>
<dbReference type="SMR" id="C6DC49"/>
<dbReference type="STRING" id="561230.PC1_3120"/>
<dbReference type="GeneID" id="67793038"/>
<dbReference type="KEGG" id="pct:PC1_3120"/>
<dbReference type="eggNOG" id="COG0853">
    <property type="taxonomic scope" value="Bacteria"/>
</dbReference>
<dbReference type="HOGENOM" id="CLU_115305_2_1_6"/>
<dbReference type="OrthoDB" id="9803983at2"/>
<dbReference type="UniPathway" id="UPA00028">
    <property type="reaction ID" value="UER00002"/>
</dbReference>
<dbReference type="Proteomes" id="UP000002736">
    <property type="component" value="Chromosome"/>
</dbReference>
<dbReference type="GO" id="GO:0005829">
    <property type="term" value="C:cytosol"/>
    <property type="evidence" value="ECO:0007669"/>
    <property type="project" value="TreeGrafter"/>
</dbReference>
<dbReference type="GO" id="GO:0004068">
    <property type="term" value="F:aspartate 1-decarboxylase activity"/>
    <property type="evidence" value="ECO:0007669"/>
    <property type="project" value="UniProtKB-UniRule"/>
</dbReference>
<dbReference type="GO" id="GO:0006523">
    <property type="term" value="P:alanine biosynthetic process"/>
    <property type="evidence" value="ECO:0007669"/>
    <property type="project" value="InterPro"/>
</dbReference>
<dbReference type="GO" id="GO:0015940">
    <property type="term" value="P:pantothenate biosynthetic process"/>
    <property type="evidence" value="ECO:0007669"/>
    <property type="project" value="UniProtKB-UniRule"/>
</dbReference>
<dbReference type="CDD" id="cd06919">
    <property type="entry name" value="Asp_decarbox"/>
    <property type="match status" value="1"/>
</dbReference>
<dbReference type="FunFam" id="2.40.40.20:FF:000004">
    <property type="entry name" value="Aspartate 1-decarboxylase"/>
    <property type="match status" value="1"/>
</dbReference>
<dbReference type="Gene3D" id="2.40.40.20">
    <property type="match status" value="1"/>
</dbReference>
<dbReference type="HAMAP" id="MF_00446">
    <property type="entry name" value="PanD"/>
    <property type="match status" value="1"/>
</dbReference>
<dbReference type="InterPro" id="IPR009010">
    <property type="entry name" value="Asp_de-COase-like_dom_sf"/>
</dbReference>
<dbReference type="InterPro" id="IPR003190">
    <property type="entry name" value="Asp_decarbox"/>
</dbReference>
<dbReference type="NCBIfam" id="TIGR00223">
    <property type="entry name" value="panD"/>
    <property type="match status" value="1"/>
</dbReference>
<dbReference type="PANTHER" id="PTHR21012">
    <property type="entry name" value="ASPARTATE 1-DECARBOXYLASE"/>
    <property type="match status" value="1"/>
</dbReference>
<dbReference type="PANTHER" id="PTHR21012:SF0">
    <property type="entry name" value="ASPARTATE 1-DECARBOXYLASE"/>
    <property type="match status" value="1"/>
</dbReference>
<dbReference type="Pfam" id="PF02261">
    <property type="entry name" value="Asp_decarbox"/>
    <property type="match status" value="1"/>
</dbReference>
<dbReference type="PIRSF" id="PIRSF006246">
    <property type="entry name" value="Asp_decarbox"/>
    <property type="match status" value="1"/>
</dbReference>
<dbReference type="SUPFAM" id="SSF50692">
    <property type="entry name" value="ADC-like"/>
    <property type="match status" value="1"/>
</dbReference>
<keyword id="KW-0068">Autocatalytic cleavage</keyword>
<keyword id="KW-0963">Cytoplasm</keyword>
<keyword id="KW-0210">Decarboxylase</keyword>
<keyword id="KW-0456">Lyase</keyword>
<keyword id="KW-0566">Pantothenate biosynthesis</keyword>
<keyword id="KW-0670">Pyruvate</keyword>
<keyword id="KW-0704">Schiff base</keyword>
<keyword id="KW-0865">Zymogen</keyword>
<proteinExistence type="inferred from homology"/>